<sequence length="353" mass="39892">MESAIGEHLQCPRTLTRRVPDTYTPPFPMWVGRADDTLHQVVMGYLGVQFRGEDQRPAALRAMRDIVAGFDLPDGPAHHDLTHHIDNQGYENLIVVGYWKDVSSQHRWSTSPPVSSWWESEDRLSDGLGFFREIVAPRAEQFETLYAFQDDLPGVGAVMDGVSGEINEHGYWGSMRERFPISQTDWMQASGELRVVAGDPAVGGRVVVRGHDNIALIRSGQDWADAEADERSLYLDEILPTLQSGMDFLRDNGPAVGCYSNRFVRNIDIDGNFLDLSYNIGHWASLDQLERWSESHPTHLRIFTTFFRVAEGLSKLRLYHEVSVFDAADQLYEYINCHPGTGMLRDAVITAEH</sequence>
<comment type="function">
    <text evidence="2">Catalyzes the dehydration of aldoximes to their corresponding nitrile (PubMed:14556637). Is active toward various arylalkyl- and alkyl-aldoximes, and to a lesser extent toward aryl-aldoximes (PubMed:14556637).</text>
</comment>
<comment type="catalytic activity">
    <reaction evidence="2">
        <text>an aliphatic aldoxime = a nitrile + H2O</text>
        <dbReference type="Rhea" id="RHEA:11316"/>
        <dbReference type="ChEBI" id="CHEBI:15377"/>
        <dbReference type="ChEBI" id="CHEBI:18379"/>
        <dbReference type="ChEBI" id="CHEBI:82744"/>
        <dbReference type="EC" id="4.8.1.2"/>
    </reaction>
</comment>
<comment type="cofactor">
    <cofactor evidence="2">
        <name>heme b</name>
        <dbReference type="ChEBI" id="CHEBI:60344"/>
    </cofactor>
</comment>
<comment type="activity regulation">
    <text evidence="2">Active when the heme iron is in the ferrous state (PubMed:14556637). Activated by FMN, Fe(2+), Sn(2+), Na(2)SO(3), Na(2)S and vitamin K3 (PubMed:14556637).</text>
</comment>
<comment type="biophysicochemical properties">
    <kinetics>
        <KM evidence="2">1.13 mM for E/Z-cyclohexanecarboxaldehyde oxime</KM>
        <KM evidence="2">1.73 mM for E/Z-n-butyraldoxime</KM>
        <KM evidence="2">5.54 mM for E/Z-isobutyraldoxime</KM>
        <KM evidence="2">1.13 mM for E/Z-n-valeraldoxime</KM>
        <KM evidence="2">3.97 mM for E/Z-isovaleraldoxime</KM>
        <KM evidence="2">2.94 mM for E/Z-n-capronaldoxime</KM>
        <KM evidence="2">6.76 mM for E/Z-isocapronaldoxime</KM>
        <KM evidence="2">1.4 mM for Z-phenylacetaldoxime</KM>
        <KM evidence="2">2.31 mM for Z-3-phenylpropionaldoxime</KM>
        <Vmax evidence="2">0.386 umol/min/mg enzyme with E/Z-cyclohexanecarboxaldehyde oxime as substrate</Vmax>
        <Vmax evidence="2">0.689 umol/min/mg enzyme with E/Z-n-butyraldoxime as substrate</Vmax>
        <Vmax evidence="2">0.041 umol/min/mg enzyme with E/Z-isobutyraldoxime as substrate</Vmax>
        <Vmax evidence="2">1.64 umol/min/mg enzyme with E/Z-n-valeraldoxime as substrate</Vmax>
        <Vmax evidence="2">0.239 umol/min/mg enzyme with E/Z-isovaleraldoxime as substrate</Vmax>
        <Vmax evidence="2">1.66 umol/min/mg enzyme with E/Z-n-capronaldoxime as substrate</Vmax>
        <Vmax evidence="2">1.32 umol/min/mg enzyme with E/Z-isocapronaldoxime as substrate</Vmax>
        <Vmax evidence="2">0.14 umol/min/mg enzyme with Z-phenylacetaldoxime as substrate</Vmax>
        <Vmax evidence="2">0.392 umol/min/mg enzyme with Z-3-phenylpropionaldoxime as substrate</Vmax>
    </kinetics>
    <phDependence>
        <text evidence="2">Optimum pH is 8.0.</text>
    </phDependence>
    <temperatureDependence>
        <text evidence="2">Optimum temperature is 30 degrees Celsius.</text>
    </temperatureDependence>
</comment>
<comment type="subunit">
    <text evidence="2">Homodimer.</text>
</comment>
<comment type="similarity">
    <text evidence="4">Belongs to the heme-containing dehydratase family.</text>
</comment>
<gene>
    <name evidence="3" type="primary">oxd</name>
</gene>
<name>OXD_RHOGO</name>
<reference key="1">
    <citation type="journal article" date="2003" name="Biochemistry">
        <title>A gene cluster responsible for alkylaldoxime metabolism coexisting with nitrile hydratase and amidase in Rhodococcus globerulus A-4.</title>
        <authorList>
            <person name="Xie S."/>
            <person name="Kato Y."/>
            <person name="Komeda H."/>
            <person name="Yoshida S."/>
            <person name="Asano Y."/>
        </authorList>
    </citation>
    <scope>NUCLEOTIDE SEQUENCE [GENOMIC DNA]</scope>
    <scope>PROTEIN SEQUENCE OF 1-40</scope>
    <scope>FUNCTION</scope>
    <scope>CATALYTIC ACTIVITY</scope>
    <scope>COFACTOR</scope>
    <scope>ACTIVITY REGULATION</scope>
    <scope>BIOPHYSICOCHEMICAL PROPERTIES</scope>
    <scope>SUBUNIT</scope>
    <source>
        <strain>A-4</strain>
    </source>
</reference>
<feature type="chain" id="PRO_0000456625" description="Aliphatic aldoxime dehydratase">
    <location>
        <begin position="1"/>
        <end position="353"/>
    </location>
</feature>
<feature type="active site" evidence="1">
    <location>
        <position position="320"/>
    </location>
</feature>
<feature type="binding site" evidence="1">
    <location>
        <position position="219"/>
    </location>
    <ligand>
        <name>an aliphatic aldoxime</name>
        <dbReference type="ChEBI" id="CHEBI:82744"/>
    </ligand>
</feature>
<feature type="binding site" description="axial binding residue" evidence="1">
    <location>
        <position position="299"/>
    </location>
    <ligand>
        <name>heme b</name>
        <dbReference type="ChEBI" id="CHEBI:60344"/>
    </ligand>
    <ligandPart>
        <name>Fe</name>
        <dbReference type="ChEBI" id="CHEBI:18248"/>
    </ligandPart>
</feature>
<feature type="binding site" evidence="1">
    <location>
        <position position="320"/>
    </location>
    <ligand>
        <name>an aliphatic aldoxime</name>
        <dbReference type="ChEBI" id="CHEBI:82744"/>
    </ligand>
</feature>
<evidence type="ECO:0000250" key="1">
    <source>
        <dbReference type="UniProtKB" id="Q76K71"/>
    </source>
</evidence>
<evidence type="ECO:0000269" key="2">
    <source>
    </source>
</evidence>
<evidence type="ECO:0000303" key="3">
    <source>
    </source>
</evidence>
<evidence type="ECO:0000305" key="4"/>
<organism>
    <name type="scientific">Rhodococcus globerulus</name>
    <dbReference type="NCBI Taxonomy" id="33008"/>
    <lineage>
        <taxon>Bacteria</taxon>
        <taxon>Bacillati</taxon>
        <taxon>Actinomycetota</taxon>
        <taxon>Actinomycetes</taxon>
        <taxon>Mycobacteriales</taxon>
        <taxon>Nocardiaceae</taxon>
        <taxon>Rhodococcus</taxon>
    </lineage>
</organism>
<dbReference type="EC" id="4.8.1.2" evidence="2"/>
<dbReference type="EMBL" id="AB105912">
    <property type="protein sequence ID" value="BAC99076.1"/>
    <property type="molecule type" value="Genomic_DNA"/>
</dbReference>
<dbReference type="SMR" id="Q76EV4"/>
<dbReference type="KEGG" id="ag:BAC99076"/>
<dbReference type="BRENDA" id="4.99.1.5">
    <property type="organism ID" value="5391"/>
</dbReference>
<dbReference type="SABIO-RK" id="Q76EV4"/>
<dbReference type="GO" id="GO:0016829">
    <property type="term" value="F:lyase activity"/>
    <property type="evidence" value="ECO:0007669"/>
    <property type="project" value="UniProtKB-KW"/>
</dbReference>
<dbReference type="GO" id="GO:0046872">
    <property type="term" value="F:metal ion binding"/>
    <property type="evidence" value="ECO:0007669"/>
    <property type="project" value="UniProtKB-KW"/>
</dbReference>
<dbReference type="InterPro" id="IPR025702">
    <property type="entry name" value="OXD"/>
</dbReference>
<dbReference type="Pfam" id="PF13816">
    <property type="entry name" value="Dehydratase_hem"/>
    <property type="match status" value="1"/>
</dbReference>
<protein>
    <recommendedName>
        <fullName evidence="4">Aliphatic aldoxime dehydratase</fullName>
        <ecNumber evidence="2">4.8.1.2</ecNumber>
    </recommendedName>
    <alternativeName>
        <fullName evidence="3">Aldoxime dehydratase</fullName>
    </alternativeName>
    <alternativeName>
        <fullName evidence="3">Alkylaldoxime dehydratase</fullName>
    </alternativeName>
    <alternativeName>
        <fullName evidence="3">OxdRG</fullName>
    </alternativeName>
</protein>
<proteinExistence type="evidence at protein level"/>
<accession>Q76EV4</accession>
<keyword id="KW-0903">Direct protein sequencing</keyword>
<keyword id="KW-0349">Heme</keyword>
<keyword id="KW-0408">Iron</keyword>
<keyword id="KW-0456">Lyase</keyword>
<keyword id="KW-0479">Metal-binding</keyword>